<dbReference type="EMBL" id="DQ354691">
    <property type="protein sequence ID" value="ABC60454.1"/>
    <property type="molecule type" value="Genomic_DNA"/>
</dbReference>
<dbReference type="RefSeq" id="YP_001001530.1">
    <property type="nucleotide sequence ID" value="NC_008788.1"/>
</dbReference>
<dbReference type="SMR" id="A1XFV1"/>
<dbReference type="GeneID" id="4699549"/>
<dbReference type="GO" id="GO:0009535">
    <property type="term" value="C:chloroplast thylakoid membrane"/>
    <property type="evidence" value="ECO:0007669"/>
    <property type="project" value="UniProtKB-SubCell"/>
</dbReference>
<dbReference type="GO" id="GO:0009523">
    <property type="term" value="C:photosystem II"/>
    <property type="evidence" value="ECO:0007669"/>
    <property type="project" value="UniProtKB-KW"/>
</dbReference>
<dbReference type="GO" id="GO:0016168">
    <property type="term" value="F:chlorophyll binding"/>
    <property type="evidence" value="ECO:0007669"/>
    <property type="project" value="UniProtKB-UniRule"/>
</dbReference>
<dbReference type="GO" id="GO:0045156">
    <property type="term" value="F:electron transporter, transferring electrons within the cyclic electron transport pathway of photosynthesis activity"/>
    <property type="evidence" value="ECO:0007669"/>
    <property type="project" value="InterPro"/>
</dbReference>
<dbReference type="GO" id="GO:0046872">
    <property type="term" value="F:metal ion binding"/>
    <property type="evidence" value="ECO:0007669"/>
    <property type="project" value="UniProtKB-KW"/>
</dbReference>
<dbReference type="GO" id="GO:0009772">
    <property type="term" value="P:photosynthetic electron transport in photosystem II"/>
    <property type="evidence" value="ECO:0007669"/>
    <property type="project" value="InterPro"/>
</dbReference>
<dbReference type="FunFam" id="1.10.10.670:FF:000001">
    <property type="entry name" value="Photosystem II CP43 reaction center protein"/>
    <property type="match status" value="1"/>
</dbReference>
<dbReference type="Gene3D" id="1.10.10.670">
    <property type="entry name" value="photosystem ii from thermosynechococcus elongatus"/>
    <property type="match status" value="1"/>
</dbReference>
<dbReference type="HAMAP" id="MF_01496">
    <property type="entry name" value="PSII_PsbC_CP43"/>
    <property type="match status" value="1"/>
</dbReference>
<dbReference type="InterPro" id="IPR000932">
    <property type="entry name" value="PS_antenna-like"/>
</dbReference>
<dbReference type="InterPro" id="IPR036001">
    <property type="entry name" value="PS_II_antenna-like_sf"/>
</dbReference>
<dbReference type="InterPro" id="IPR005869">
    <property type="entry name" value="PSII_PsbC"/>
</dbReference>
<dbReference type="InterPro" id="IPR044900">
    <property type="entry name" value="PSII_PsbC_sf"/>
</dbReference>
<dbReference type="NCBIfam" id="TIGR01153">
    <property type="entry name" value="psbC"/>
    <property type="match status" value="1"/>
</dbReference>
<dbReference type="Pfam" id="PF00421">
    <property type="entry name" value="PSII"/>
    <property type="match status" value="1"/>
</dbReference>
<dbReference type="SUPFAM" id="SSF161077">
    <property type="entry name" value="Photosystem II antenna protein-like"/>
    <property type="match status" value="1"/>
</dbReference>
<reference key="1">
    <citation type="journal article" date="2007" name="BMC Genomics">
        <title>Comparative chloroplast genomics: analyses including new sequences from the angiosperms Nuphar advena and Ranunculus macranthus.</title>
        <authorList>
            <person name="Raubeson L.A."/>
            <person name="Peery R."/>
            <person name="Chumley T.W."/>
            <person name="Dziubek C."/>
            <person name="Fourcade H.M."/>
            <person name="Boore J.L."/>
            <person name="Jansen R.K."/>
        </authorList>
    </citation>
    <scope>NUCLEOTIDE SEQUENCE [LARGE SCALE GENOMIC DNA]</scope>
</reference>
<accession>A1XFV1</accession>
<evidence type="ECO:0000255" key="1">
    <source>
        <dbReference type="HAMAP-Rule" id="MF_01496"/>
    </source>
</evidence>
<name>PSBC_NUPAD</name>
<feature type="propeptide" id="PRO_0000431174" evidence="1">
    <location>
        <begin position="1"/>
        <end position="14"/>
    </location>
</feature>
<feature type="chain" id="PRO_0000361436" description="Photosystem II CP43 reaction center protein" evidence="1">
    <location>
        <begin position="15"/>
        <end position="473"/>
    </location>
</feature>
<feature type="transmembrane region" description="Helical" evidence="1">
    <location>
        <begin position="69"/>
        <end position="93"/>
    </location>
</feature>
<feature type="transmembrane region" description="Helical" evidence="1">
    <location>
        <begin position="134"/>
        <end position="155"/>
    </location>
</feature>
<feature type="transmembrane region" description="Helical" evidence="1">
    <location>
        <begin position="178"/>
        <end position="200"/>
    </location>
</feature>
<feature type="transmembrane region" description="Helical" evidence="1">
    <location>
        <begin position="255"/>
        <end position="275"/>
    </location>
</feature>
<feature type="transmembrane region" description="Helical" evidence="1">
    <location>
        <begin position="291"/>
        <end position="312"/>
    </location>
</feature>
<feature type="transmembrane region" description="Helical" evidence="1">
    <location>
        <begin position="447"/>
        <end position="471"/>
    </location>
</feature>
<feature type="binding site" evidence="1">
    <location>
        <position position="367"/>
    </location>
    <ligand>
        <name>[CaMn4O5] cluster</name>
        <dbReference type="ChEBI" id="CHEBI:189552"/>
    </ligand>
</feature>
<feature type="modified residue" description="N-acetylthreonine" evidence="1">
    <location>
        <position position="15"/>
    </location>
</feature>
<feature type="modified residue" description="Phosphothreonine" evidence="1">
    <location>
        <position position="15"/>
    </location>
</feature>
<protein>
    <recommendedName>
        <fullName evidence="1">Photosystem II CP43 reaction center protein</fullName>
    </recommendedName>
    <alternativeName>
        <fullName evidence="1">PSII 43 kDa protein</fullName>
    </alternativeName>
    <alternativeName>
        <fullName evidence="1">Protein CP-43</fullName>
    </alternativeName>
</protein>
<keyword id="KW-0007">Acetylation</keyword>
<keyword id="KW-0148">Chlorophyll</keyword>
<keyword id="KW-0150">Chloroplast</keyword>
<keyword id="KW-0157">Chromophore</keyword>
<keyword id="KW-0464">Manganese</keyword>
<keyword id="KW-0472">Membrane</keyword>
<keyword id="KW-0479">Metal-binding</keyword>
<keyword id="KW-0597">Phosphoprotein</keyword>
<keyword id="KW-0602">Photosynthesis</keyword>
<keyword id="KW-0604">Photosystem II</keyword>
<keyword id="KW-0934">Plastid</keyword>
<keyword id="KW-0793">Thylakoid</keyword>
<keyword id="KW-0812">Transmembrane</keyword>
<keyword id="KW-1133">Transmembrane helix</keyword>
<organism>
    <name type="scientific">Nuphar advena</name>
    <name type="common">Common spatterdock</name>
    <name type="synonym">Nuphar lutea subsp. advena</name>
    <dbReference type="NCBI Taxonomy" id="77108"/>
    <lineage>
        <taxon>Eukaryota</taxon>
        <taxon>Viridiplantae</taxon>
        <taxon>Streptophyta</taxon>
        <taxon>Embryophyta</taxon>
        <taxon>Tracheophyta</taxon>
        <taxon>Spermatophyta</taxon>
        <taxon>Magnoliopsida</taxon>
        <taxon>Nymphaeales</taxon>
        <taxon>Nymphaeaceae</taxon>
        <taxon>Nuphar</taxon>
    </lineage>
</organism>
<sequence length="473" mass="51992">MKTLYSLRRFYPVETLFNGTLALAGRDQETTGFAWWAGNARLINLSGKLLGAHVAHAGLIVFWAGAMNLFEVAHFVPEKPMYEQGLILLPHLATLGWGVGPGGEVVDTFPYFVSGVLHLISSAVLGFGGIYHALLGPETLEESFPFFGYVWKDRNKMTTILGIHLILLGLGAFLLVFKALYFGGVYDTWAPGGGDVRRITNLTLSPSIIFGYLLKSPFGGEGWIVSVDDLEDIIGGHVWLGSICILGGIWHILTKPFAWARRAFVWSGEAYLSYSLGALSVFGFIACCFVWFNNTAYPSEFYGPTGPEASQAQAFTFLVRDQRLGANVGSAQGPTGLGKYLMRSPTGEIIFGGETMRFWDLRAPWLEPLRGPNGLDLSRLKKDIQPWQERRSAEYMTHAPLGSLNSVGGVATEINAVNYVSPRSWLATSHFVLGFFFFVGHLWHAGRARAAAAGFEKGIDRDFEPVLFMTPLN</sequence>
<geneLocation type="chloroplast"/>
<gene>
    <name evidence="1" type="primary">psbC</name>
</gene>
<proteinExistence type="inferred from homology"/>
<comment type="function">
    <text evidence="1">One of the components of the core complex of photosystem II (PSII). It binds chlorophyll and helps catalyze the primary light-induced photochemical processes of PSII. PSII is a light-driven water:plastoquinone oxidoreductase, using light energy to abstract electrons from H(2)O, generating O(2) and a proton gradient subsequently used for ATP formation.</text>
</comment>
<comment type="cofactor">
    <text evidence="1">Binds multiple chlorophylls and provides some of the ligands for the Ca-4Mn-5O cluster of the oxygen-evolving complex. It may also provide a ligand for a Cl- that is required for oxygen evolution. PSII binds additional chlorophylls, carotenoids and specific lipids.</text>
</comment>
<comment type="subunit">
    <text evidence="1">PSII is composed of 1 copy each of membrane proteins PsbA, PsbB, PsbC, PsbD, PsbE, PsbF, PsbH, PsbI, PsbJ, PsbK, PsbL, PsbM, PsbT, PsbX, PsbY, PsbZ, Psb30/Ycf12, at least 3 peripheral proteins of the oxygen-evolving complex and a large number of cofactors. It forms dimeric complexes.</text>
</comment>
<comment type="subcellular location">
    <subcellularLocation>
        <location evidence="1">Plastid</location>
        <location evidence="1">Chloroplast thylakoid membrane</location>
        <topology evidence="1">Multi-pass membrane protein</topology>
    </subcellularLocation>
</comment>
<comment type="similarity">
    <text evidence="1">Belongs to the PsbB/PsbC family. PsbC subfamily.</text>
</comment>